<accession>Q54V07</accession>
<dbReference type="EMBL" id="FJ374904">
    <property type="protein sequence ID" value="ACN71254.1"/>
    <property type="molecule type" value="Genomic_DNA"/>
</dbReference>
<dbReference type="EMBL" id="AAFI02000037">
    <property type="protein sequence ID" value="EAL67146.1"/>
    <property type="molecule type" value="Genomic_DNA"/>
</dbReference>
<dbReference type="RefSeq" id="XP_641124.1">
    <property type="nucleotide sequence ID" value="XM_636032.1"/>
</dbReference>
<dbReference type="FunCoup" id="Q54V07">
    <property type="interactions" value="1"/>
</dbReference>
<dbReference type="STRING" id="44689.Q54V07"/>
<dbReference type="GlyCosmos" id="Q54V07">
    <property type="glycosylation" value="19 sites, No reported glycans"/>
</dbReference>
<dbReference type="GlyGen" id="Q54V07">
    <property type="glycosylation" value="19 sites"/>
</dbReference>
<dbReference type="PaxDb" id="44689-DDB0266979"/>
<dbReference type="EnsemblProtists" id="EAL67146">
    <property type="protein sequence ID" value="EAL67146"/>
    <property type="gene ID" value="DDB_G0280689"/>
</dbReference>
<dbReference type="GeneID" id="8622683"/>
<dbReference type="KEGG" id="ddi:DDB_G0280689"/>
<dbReference type="dictyBase" id="DDB_G0280689">
    <property type="gene designation" value="tgrB1"/>
</dbReference>
<dbReference type="VEuPathDB" id="AmoebaDB:DDB_G0280689"/>
<dbReference type="eggNOG" id="ENOG502RI4S">
    <property type="taxonomic scope" value="Eukaryota"/>
</dbReference>
<dbReference type="HOGENOM" id="CLU_325834_0_0_1"/>
<dbReference type="InParanoid" id="Q54V07"/>
<dbReference type="OMA" id="MWDIALE"/>
<dbReference type="PhylomeDB" id="Q54V07"/>
<dbReference type="PRO" id="PR:Q54V07"/>
<dbReference type="Proteomes" id="UP000002195">
    <property type="component" value="Chromosome 3"/>
</dbReference>
<dbReference type="GO" id="GO:0009897">
    <property type="term" value="C:external side of plasma membrane"/>
    <property type="evidence" value="ECO:0000314"/>
    <property type="project" value="dictyBase"/>
</dbReference>
<dbReference type="GO" id="GO:0098635">
    <property type="term" value="C:protein complex involved in cell-cell adhesion"/>
    <property type="evidence" value="ECO:0000314"/>
    <property type="project" value="dictyBase"/>
</dbReference>
<dbReference type="GO" id="GO:0004888">
    <property type="term" value="F:transmembrane signaling receptor activity"/>
    <property type="evidence" value="ECO:0000314"/>
    <property type="project" value="dictyBase"/>
</dbReference>
<dbReference type="GO" id="GO:0031152">
    <property type="term" value="P:aggregation involved in sorocarp development"/>
    <property type="evidence" value="ECO:0000270"/>
    <property type="project" value="dictyBase"/>
</dbReference>
<dbReference type="GO" id="GO:0099138">
    <property type="term" value="P:altruistic, chimeric sorocarp development"/>
    <property type="evidence" value="ECO:0000314"/>
    <property type="project" value="dictyBase"/>
</dbReference>
<dbReference type="GO" id="GO:0048870">
    <property type="term" value="P:cell motility"/>
    <property type="evidence" value="ECO:0000316"/>
    <property type="project" value="dictyBase"/>
</dbReference>
<dbReference type="GO" id="GO:0007166">
    <property type="term" value="P:cell surface receptor signaling pathway"/>
    <property type="evidence" value="ECO:0000316"/>
    <property type="project" value="dictyBase"/>
</dbReference>
<dbReference type="GO" id="GO:0009988">
    <property type="term" value="P:cell-cell recognition"/>
    <property type="evidence" value="ECO:0000315"/>
    <property type="project" value="dictyBase"/>
</dbReference>
<dbReference type="GO" id="GO:0097656">
    <property type="term" value="P:cell-cell self recognition"/>
    <property type="evidence" value="ECO:0000316"/>
    <property type="project" value="dictyBase"/>
</dbReference>
<dbReference type="GO" id="GO:0007157">
    <property type="term" value="P:heterophilic cell-cell adhesion via plasma membrane cell adhesion molecules"/>
    <property type="evidence" value="ECO:0000314"/>
    <property type="project" value="dictyBase"/>
</dbReference>
<dbReference type="GO" id="GO:0099120">
    <property type="term" value="P:socially cooperative development"/>
    <property type="evidence" value="ECO:0000315"/>
    <property type="project" value="dictyBase"/>
</dbReference>
<dbReference type="CDD" id="cd00603">
    <property type="entry name" value="IPT_PCSR"/>
    <property type="match status" value="1"/>
</dbReference>
<dbReference type="Gene3D" id="2.60.40.10">
    <property type="entry name" value="Immunoglobulins"/>
    <property type="match status" value="2"/>
</dbReference>
<dbReference type="InterPro" id="IPR052014">
    <property type="entry name" value="Dictyostelium_Tiger"/>
</dbReference>
<dbReference type="InterPro" id="IPR013783">
    <property type="entry name" value="Ig-like_fold"/>
</dbReference>
<dbReference type="InterPro" id="IPR014756">
    <property type="entry name" value="Ig_E-set"/>
</dbReference>
<dbReference type="InterPro" id="IPR002909">
    <property type="entry name" value="IPT_dom"/>
</dbReference>
<dbReference type="PANTHER" id="PTHR31341">
    <property type="entry name" value="IPT/TIG DOMAIN-CONTAINING PROTEIN-RELATED-RELATED"/>
    <property type="match status" value="1"/>
</dbReference>
<dbReference type="PANTHER" id="PTHR31341:SF18">
    <property type="entry name" value="IPT_TIG DOMAIN-CONTAINING PROTEIN-RELATED"/>
    <property type="match status" value="1"/>
</dbReference>
<dbReference type="Pfam" id="PF01833">
    <property type="entry name" value="TIG"/>
    <property type="match status" value="2"/>
</dbReference>
<dbReference type="SUPFAM" id="SSF81296">
    <property type="entry name" value="E set domains"/>
    <property type="match status" value="2"/>
</dbReference>
<comment type="function">
    <text evidence="2">tgrB1 and tgrC1 are involved in kin discrimination. They play an essential role in aggregation and subsequent development.</text>
</comment>
<comment type="subcellular location">
    <subcellularLocation>
        <location evidence="3">Cell membrane</location>
        <topology evidence="3">Single-pass type I membrane protein</topology>
    </subcellularLocation>
</comment>
<comment type="disruption phenotype">
    <text evidence="2">TgrB1 and tgrC1 double mutants show strain segregation in chimeras with wild-type cells.</text>
</comment>
<comment type="miscellaneous">
    <text>The tgrB1 gene is highly polymorphic.</text>
</comment>
<gene>
    <name type="primary">tgrB1</name>
    <name type="synonym">lagB</name>
    <name type="synonym">lagB1</name>
    <name type="ORF">DDB_G0280689</name>
</gene>
<name>TGRB1_DICDI</name>
<proteinExistence type="inferred from homology"/>
<sequence>MKVIYIYLLLLLVCKFLFVKSSCSLKVGKIECTKELETFLLYNETVVNVKMDTNGVKYYFNALEFPYKNLLCDLNIDIKFTPEIPSFPNIPTTGGDFGFTFNFPCDYRRRVKRIEIERTILSLSFDTSKNQFVTYLNPGCGPFNISSSGIQILSTTYETGAIPNVPILDDDKGILTIQGSNLYNTSIKIYSNNILKDTNPSGALDASHSSVTFSAEEFLTPNNWTIEVSICGSFYKSYSFPYFPKLDKMEGVLNDNGGNMVFTGKHLRPKHNVTGTFGNKTIECLTSNSSKSITCTIPSRKNYGFLGYDIPVTITIDGEYKSNTIKISYDLPLIQSVSQRGNSQIFDVTGVYFSGVKNMTVITGKNMKTDIIQKKTATLEEPGFFIESNYTIFIFLPNNTQPGFMNLVVGDGGSETFTSPRYNFKITPTITAGQTFNSTTSGNDLEIKGIFMRTVDSDGRDVPLTVNSGSGGLVCNPLKDGDGLLFTCVLGPGFGSSHTMNVYYNLIPIGSFTVSYNPPYLGTSEQEKDGTIKMNGKDLGESVKDSIMTVVYSDGNTVNGTVIKSSHTSLIFRYPIGNRNTASYIFQLGDQKSNKAGPFTLKPIIENTDPAVPCGGGVVTINGHYFFNYTKDTTTITIGKVPCNISSISETTIECVIVPNLRSLSPYYTSGTKPLVISSSNPGTEKVYQLTPAGLNYKFAPPTITNTSAIDQTALITIYGTSFGDANLEILINDKPCTQPEINIHTYSSLTCNVTNYDEMKIYNYSNTKFNISISVDGQYFIADIFQFKYESGIIYSENKSTGFPNEMYLGFVVFVIFIALISFAAKNQIEKYFEERKSRKAFRSLDNLRLKLRQKHATEIAKHYTFGEQSAPKPDKSTFYDIRKKLSRLPLIRRCFKEHTD</sequence>
<feature type="signal peptide" evidence="1">
    <location>
        <begin position="1"/>
        <end position="24"/>
    </location>
</feature>
<feature type="chain" id="PRO_0000393399" description="Tiger protein B1">
    <location>
        <begin position="25"/>
        <end position="902"/>
    </location>
</feature>
<feature type="topological domain" description="Extracellular" evidence="1">
    <location>
        <begin position="25"/>
        <end position="803"/>
    </location>
</feature>
<feature type="transmembrane region" description="Helical" evidence="1">
    <location>
        <begin position="804"/>
        <end position="824"/>
    </location>
</feature>
<feature type="topological domain" description="Cytoplasmic" evidence="1">
    <location>
        <begin position="825"/>
        <end position="902"/>
    </location>
</feature>
<feature type="domain" description="IPT/TIG 1">
    <location>
        <begin position="249"/>
        <end position="323"/>
    </location>
</feature>
<feature type="domain" description="IPT/TIG 2">
    <location>
        <begin position="603"/>
        <end position="680"/>
    </location>
</feature>
<feature type="domain" description="IPT/TIG 3">
    <location>
        <begin position="704"/>
        <end position="788"/>
    </location>
</feature>
<feature type="glycosylation site" description="N-linked (GlcNAc...) asparagine" evidence="1">
    <location>
        <position position="43"/>
    </location>
</feature>
<feature type="glycosylation site" description="N-linked (GlcNAc...) asparagine" evidence="1">
    <location>
        <position position="144"/>
    </location>
</feature>
<feature type="glycosylation site" description="N-linked (GlcNAc...) asparagine" evidence="1">
    <location>
        <position position="184"/>
    </location>
</feature>
<feature type="glycosylation site" description="N-linked (GlcNAc...) asparagine" evidence="1">
    <location>
        <position position="223"/>
    </location>
</feature>
<feature type="glycosylation site" description="N-linked (GlcNAc...) asparagine" evidence="1">
    <location>
        <position position="272"/>
    </location>
</feature>
<feature type="glycosylation site" description="N-linked (GlcNAc...) asparagine" evidence="1">
    <location>
        <position position="279"/>
    </location>
</feature>
<feature type="glycosylation site" description="N-linked (GlcNAc...) asparagine" evidence="1">
    <location>
        <position position="288"/>
    </location>
</feature>
<feature type="glycosylation site" description="N-linked (GlcNAc...) asparagine" evidence="1">
    <location>
        <position position="358"/>
    </location>
</feature>
<feature type="glycosylation site" description="N-linked (GlcNAc...) asparagine" evidence="1">
    <location>
        <position position="389"/>
    </location>
</feature>
<feature type="glycosylation site" description="N-linked (GlcNAc...) asparagine" evidence="1">
    <location>
        <position position="398"/>
    </location>
</feature>
<feature type="glycosylation site" description="N-linked (GlcNAc...) asparagine" evidence="1">
    <location>
        <position position="437"/>
    </location>
</feature>
<feature type="glycosylation site" description="N-linked (GlcNAc...) asparagine" evidence="1">
    <location>
        <position position="559"/>
    </location>
</feature>
<feature type="glycosylation site" description="N-linked (GlcNAc...) asparagine" evidence="1">
    <location>
        <position position="628"/>
    </location>
</feature>
<feature type="glycosylation site" description="N-linked (GlcNAc...) asparagine" evidence="1">
    <location>
        <position position="644"/>
    </location>
</feature>
<feature type="glycosylation site" description="N-linked (GlcNAc...) asparagine" evidence="1">
    <location>
        <position position="706"/>
    </location>
</feature>
<feature type="glycosylation site" description="N-linked (GlcNAc...) asparagine" evidence="1">
    <location>
        <position position="753"/>
    </location>
</feature>
<feature type="glycosylation site" description="N-linked (GlcNAc...) asparagine" evidence="1">
    <location>
        <position position="764"/>
    </location>
</feature>
<feature type="glycosylation site" description="N-linked (GlcNAc...) asparagine" evidence="1">
    <location>
        <position position="771"/>
    </location>
</feature>
<feature type="glycosylation site" description="N-linked (GlcNAc...) asparagine" evidence="1">
    <location>
        <position position="799"/>
    </location>
</feature>
<keyword id="KW-1003">Cell membrane</keyword>
<keyword id="KW-0325">Glycoprotein</keyword>
<keyword id="KW-0472">Membrane</keyword>
<keyword id="KW-1185">Reference proteome</keyword>
<keyword id="KW-0677">Repeat</keyword>
<keyword id="KW-0732">Signal</keyword>
<keyword id="KW-0812">Transmembrane</keyword>
<keyword id="KW-1133">Transmembrane helix</keyword>
<evidence type="ECO:0000255" key="1"/>
<evidence type="ECO:0000269" key="2">
    <source>
    </source>
</evidence>
<evidence type="ECO:0000305" key="3"/>
<organism>
    <name type="scientific">Dictyostelium discoideum</name>
    <name type="common">Social amoeba</name>
    <dbReference type="NCBI Taxonomy" id="44689"/>
    <lineage>
        <taxon>Eukaryota</taxon>
        <taxon>Amoebozoa</taxon>
        <taxon>Evosea</taxon>
        <taxon>Eumycetozoa</taxon>
        <taxon>Dictyostelia</taxon>
        <taxon>Dictyosteliales</taxon>
        <taxon>Dictyosteliaceae</taxon>
        <taxon>Dictyostelium</taxon>
    </lineage>
</organism>
<reference key="1">
    <citation type="journal article" date="2009" name="Curr. Biol.">
        <title>Polymorphic members of the lag gene family mediate kin discrimination in Dictyostelium.</title>
        <authorList>
            <person name="Benabentos R."/>
            <person name="Hirose S."/>
            <person name="Sucgang R."/>
            <person name="Curk T."/>
            <person name="Katoh M."/>
            <person name="Ostrowski E.A."/>
            <person name="Strassmann J.E."/>
            <person name="Queller D.C."/>
            <person name="Zupan B."/>
            <person name="Shaulsky G."/>
            <person name="Kuspa A."/>
        </authorList>
    </citation>
    <scope>NUCLEOTIDE SEQUENCE [GENOMIC DNA]</scope>
    <scope>FUNCTION</scope>
    <scope>DISRUPTION PHENOTYPE</scope>
    <source>
        <strain>AX4</strain>
    </source>
</reference>
<reference key="2">
    <citation type="journal article" date="2005" name="Nature">
        <title>The genome of the social amoeba Dictyostelium discoideum.</title>
        <authorList>
            <person name="Eichinger L."/>
            <person name="Pachebat J.A."/>
            <person name="Gloeckner G."/>
            <person name="Rajandream M.A."/>
            <person name="Sucgang R."/>
            <person name="Berriman M."/>
            <person name="Song J."/>
            <person name="Olsen R."/>
            <person name="Szafranski K."/>
            <person name="Xu Q."/>
            <person name="Tunggal B."/>
            <person name="Kummerfeld S."/>
            <person name="Madera M."/>
            <person name="Konfortov B.A."/>
            <person name="Rivero F."/>
            <person name="Bankier A.T."/>
            <person name="Lehmann R."/>
            <person name="Hamlin N."/>
            <person name="Davies R."/>
            <person name="Gaudet P."/>
            <person name="Fey P."/>
            <person name="Pilcher K."/>
            <person name="Chen G."/>
            <person name="Saunders D."/>
            <person name="Sodergren E.J."/>
            <person name="Davis P."/>
            <person name="Kerhornou A."/>
            <person name="Nie X."/>
            <person name="Hall N."/>
            <person name="Anjard C."/>
            <person name="Hemphill L."/>
            <person name="Bason N."/>
            <person name="Farbrother P."/>
            <person name="Desany B."/>
            <person name="Just E."/>
            <person name="Morio T."/>
            <person name="Rost R."/>
            <person name="Churcher C.M."/>
            <person name="Cooper J."/>
            <person name="Haydock S."/>
            <person name="van Driessche N."/>
            <person name="Cronin A."/>
            <person name="Goodhead I."/>
            <person name="Muzny D.M."/>
            <person name="Mourier T."/>
            <person name="Pain A."/>
            <person name="Lu M."/>
            <person name="Harper D."/>
            <person name="Lindsay R."/>
            <person name="Hauser H."/>
            <person name="James K.D."/>
            <person name="Quiles M."/>
            <person name="Madan Babu M."/>
            <person name="Saito T."/>
            <person name="Buchrieser C."/>
            <person name="Wardroper A."/>
            <person name="Felder M."/>
            <person name="Thangavelu M."/>
            <person name="Johnson D."/>
            <person name="Knights A."/>
            <person name="Loulseged H."/>
            <person name="Mungall K.L."/>
            <person name="Oliver K."/>
            <person name="Price C."/>
            <person name="Quail M.A."/>
            <person name="Urushihara H."/>
            <person name="Hernandez J."/>
            <person name="Rabbinowitsch E."/>
            <person name="Steffen D."/>
            <person name="Sanders M."/>
            <person name="Ma J."/>
            <person name="Kohara Y."/>
            <person name="Sharp S."/>
            <person name="Simmonds M.N."/>
            <person name="Spiegler S."/>
            <person name="Tivey A."/>
            <person name="Sugano S."/>
            <person name="White B."/>
            <person name="Walker D."/>
            <person name="Woodward J.R."/>
            <person name="Winckler T."/>
            <person name="Tanaka Y."/>
            <person name="Shaulsky G."/>
            <person name="Schleicher M."/>
            <person name="Weinstock G.M."/>
            <person name="Rosenthal A."/>
            <person name="Cox E.C."/>
            <person name="Chisholm R.L."/>
            <person name="Gibbs R.A."/>
            <person name="Loomis W.F."/>
            <person name="Platzer M."/>
            <person name="Kay R.R."/>
            <person name="Williams J.G."/>
            <person name="Dear P.H."/>
            <person name="Noegel A.A."/>
            <person name="Barrell B.G."/>
            <person name="Kuspa A."/>
        </authorList>
    </citation>
    <scope>NUCLEOTIDE SEQUENCE [LARGE SCALE GENOMIC DNA]</scope>
    <source>
        <strain>AX4</strain>
    </source>
</reference>
<protein>
    <recommendedName>
        <fullName>Tiger protein B1</fullName>
    </recommendedName>
    <alternativeName>
        <fullName>Loose aggregate B1 protein</fullName>
    </alternativeName>
    <alternativeName>
        <fullName>Transmembrane, IPT, Ig, E-set, Repeat protein B1</fullName>
    </alternativeName>
</protein>